<sequence length="131" mass="15187">MRHYEIVFMVHPDQSEQVPGMIERYTAAITGAEGKIHRLEDWGRRQLAYPINKLHKAHYVLMNVEAPQEVIDELETTFRFNDAVIRSMVMRTKHAVTEASPMVKAKDERRERRDDFANETADDAEAGDSEE</sequence>
<gene>
    <name evidence="1" type="primary">rpsF</name>
    <name type="ordered locus">ECSE_4499</name>
</gene>
<organism>
    <name type="scientific">Escherichia coli (strain SE11)</name>
    <dbReference type="NCBI Taxonomy" id="409438"/>
    <lineage>
        <taxon>Bacteria</taxon>
        <taxon>Pseudomonadati</taxon>
        <taxon>Pseudomonadota</taxon>
        <taxon>Gammaproteobacteria</taxon>
        <taxon>Enterobacterales</taxon>
        <taxon>Enterobacteriaceae</taxon>
        <taxon>Escherichia</taxon>
    </lineage>
</organism>
<evidence type="ECO:0000255" key="1">
    <source>
        <dbReference type="HAMAP-Rule" id="MF_00360"/>
    </source>
</evidence>
<evidence type="ECO:0000256" key="2">
    <source>
        <dbReference type="SAM" id="MobiDB-lite"/>
    </source>
</evidence>
<evidence type="ECO:0000305" key="3"/>
<keyword id="KW-0007">Acetylation</keyword>
<keyword id="KW-0687">Ribonucleoprotein</keyword>
<keyword id="KW-0689">Ribosomal protein</keyword>
<keyword id="KW-0694">RNA-binding</keyword>
<keyword id="KW-0699">rRNA-binding</keyword>
<reference key="1">
    <citation type="journal article" date="2008" name="DNA Res.">
        <title>Complete genome sequence and comparative analysis of the wild-type commensal Escherichia coli strain SE11 isolated from a healthy adult.</title>
        <authorList>
            <person name="Oshima K."/>
            <person name="Toh H."/>
            <person name="Ogura Y."/>
            <person name="Sasamoto H."/>
            <person name="Morita H."/>
            <person name="Park S.-H."/>
            <person name="Ooka T."/>
            <person name="Iyoda S."/>
            <person name="Taylor T.D."/>
            <person name="Hayashi T."/>
            <person name="Itoh K."/>
            <person name="Hattori M."/>
        </authorList>
    </citation>
    <scope>NUCLEOTIDE SEQUENCE [LARGE SCALE GENOMIC DNA]</scope>
    <source>
        <strain>SE11</strain>
    </source>
</reference>
<dbReference type="EMBL" id="AP009240">
    <property type="protein sequence ID" value="BAG80023.1"/>
    <property type="molecule type" value="Genomic_DNA"/>
</dbReference>
<dbReference type="RefSeq" id="WP_001216676.1">
    <property type="nucleotide sequence ID" value="NC_011415.1"/>
</dbReference>
<dbReference type="SMR" id="B6I2A6"/>
<dbReference type="GeneID" id="93777623"/>
<dbReference type="KEGG" id="ecy:ECSE_4499"/>
<dbReference type="HOGENOM" id="CLU_113441_6_1_6"/>
<dbReference type="Proteomes" id="UP000008199">
    <property type="component" value="Chromosome"/>
</dbReference>
<dbReference type="GO" id="GO:0022627">
    <property type="term" value="C:cytosolic small ribosomal subunit"/>
    <property type="evidence" value="ECO:0007669"/>
    <property type="project" value="TreeGrafter"/>
</dbReference>
<dbReference type="GO" id="GO:0070181">
    <property type="term" value="F:small ribosomal subunit rRNA binding"/>
    <property type="evidence" value="ECO:0007669"/>
    <property type="project" value="TreeGrafter"/>
</dbReference>
<dbReference type="GO" id="GO:0003735">
    <property type="term" value="F:structural constituent of ribosome"/>
    <property type="evidence" value="ECO:0007669"/>
    <property type="project" value="InterPro"/>
</dbReference>
<dbReference type="GO" id="GO:0006412">
    <property type="term" value="P:translation"/>
    <property type="evidence" value="ECO:0007669"/>
    <property type="project" value="UniProtKB-UniRule"/>
</dbReference>
<dbReference type="CDD" id="cd00473">
    <property type="entry name" value="bS6"/>
    <property type="match status" value="1"/>
</dbReference>
<dbReference type="FunFam" id="3.30.70.60:FF:000003">
    <property type="entry name" value="30S ribosomal protein S6"/>
    <property type="match status" value="1"/>
</dbReference>
<dbReference type="Gene3D" id="3.30.70.60">
    <property type="match status" value="1"/>
</dbReference>
<dbReference type="HAMAP" id="MF_00360">
    <property type="entry name" value="Ribosomal_bS6"/>
    <property type="match status" value="1"/>
</dbReference>
<dbReference type="InterPro" id="IPR000529">
    <property type="entry name" value="Ribosomal_bS6"/>
</dbReference>
<dbReference type="InterPro" id="IPR020815">
    <property type="entry name" value="Ribosomal_bS6_CS"/>
</dbReference>
<dbReference type="InterPro" id="IPR035980">
    <property type="entry name" value="Ribosomal_bS6_sf"/>
</dbReference>
<dbReference type="InterPro" id="IPR020814">
    <property type="entry name" value="Ribosomal_S6_plastid/chlpt"/>
</dbReference>
<dbReference type="InterPro" id="IPR014717">
    <property type="entry name" value="Transl_elong_EF1B/ribsomal_bS6"/>
</dbReference>
<dbReference type="NCBIfam" id="TIGR00166">
    <property type="entry name" value="S6"/>
    <property type="match status" value="1"/>
</dbReference>
<dbReference type="PANTHER" id="PTHR21011">
    <property type="entry name" value="MITOCHONDRIAL 28S RIBOSOMAL PROTEIN S6"/>
    <property type="match status" value="1"/>
</dbReference>
<dbReference type="PANTHER" id="PTHR21011:SF1">
    <property type="entry name" value="SMALL RIBOSOMAL SUBUNIT PROTEIN BS6M"/>
    <property type="match status" value="1"/>
</dbReference>
<dbReference type="Pfam" id="PF01250">
    <property type="entry name" value="Ribosomal_S6"/>
    <property type="match status" value="1"/>
</dbReference>
<dbReference type="SUPFAM" id="SSF54995">
    <property type="entry name" value="Ribosomal protein S6"/>
    <property type="match status" value="1"/>
</dbReference>
<dbReference type="PROSITE" id="PS01048">
    <property type="entry name" value="RIBOSOMAL_S6"/>
    <property type="match status" value="1"/>
</dbReference>
<protein>
    <recommendedName>
        <fullName evidence="1">Small ribosomal subunit protein bS6</fullName>
    </recommendedName>
    <alternativeName>
        <fullName evidence="3">30S ribosomal protein S6</fullName>
    </alternativeName>
</protein>
<comment type="function">
    <text evidence="1">Binds together with bS18 to 16S ribosomal RNA.</text>
</comment>
<comment type="similarity">
    <text evidence="1">Belongs to the bacterial ribosomal protein bS6 family.</text>
</comment>
<name>RS6_ECOSE</name>
<accession>B6I2A6</accession>
<proteinExistence type="inferred from homology"/>
<feature type="chain" id="PRO_1000120749" description="Small ribosomal subunit protein bS6">
    <location>
        <begin position="1"/>
        <end position="131"/>
    </location>
</feature>
<feature type="region of interest" description="Disordered" evidence="2">
    <location>
        <begin position="98"/>
        <end position="131"/>
    </location>
</feature>
<feature type="compositionally biased region" description="Basic and acidic residues" evidence="2">
    <location>
        <begin position="104"/>
        <end position="116"/>
    </location>
</feature>
<feature type="compositionally biased region" description="Acidic residues" evidence="2">
    <location>
        <begin position="120"/>
        <end position="131"/>
    </location>
</feature>
<feature type="modified residue" description="N6-acetyllysine" evidence="1">
    <location>
        <position position="93"/>
    </location>
</feature>